<comment type="function">
    <text>Involved in arsenical resistance. Thought to form the channel of an arsenite pump.</text>
</comment>
<comment type="subcellular location">
    <subcellularLocation>
        <location evidence="2">Cell inner membrane</location>
        <topology evidence="2">Multi-pass membrane protein</topology>
    </subcellularLocation>
</comment>
<feature type="chain" id="PRO_0000064661" description="Arsenical pump membrane protein">
    <location>
        <begin position="1"/>
        <end position="429"/>
    </location>
</feature>
<feature type="transmembrane region" description="Helical" evidence="1">
    <location>
        <begin position="21"/>
        <end position="41"/>
    </location>
</feature>
<feature type="transmembrane region" description="Helical" evidence="1">
    <location>
        <begin position="46"/>
        <end position="66"/>
    </location>
</feature>
<feature type="transmembrane region" description="Helical" evidence="1">
    <location>
        <begin position="98"/>
        <end position="118"/>
    </location>
</feature>
<feature type="transmembrane region" description="Helical" evidence="1">
    <location>
        <begin position="121"/>
        <end position="141"/>
    </location>
</feature>
<feature type="transmembrane region" description="Helical" evidence="1">
    <location>
        <begin position="178"/>
        <end position="198"/>
    </location>
</feature>
<feature type="transmembrane region" description="Helical" evidence="1">
    <location>
        <begin position="228"/>
        <end position="248"/>
    </location>
</feature>
<feature type="transmembrane region" description="Helical" evidence="1">
    <location>
        <begin position="249"/>
        <end position="269"/>
    </location>
</feature>
<feature type="transmembrane region" description="Helical" evidence="1">
    <location>
        <begin position="274"/>
        <end position="294"/>
    </location>
</feature>
<feature type="transmembrane region" description="Helical" evidence="1">
    <location>
        <begin position="316"/>
        <end position="336"/>
    </location>
</feature>
<feature type="transmembrane region" description="Helical" evidence="1">
    <location>
        <begin position="407"/>
        <end position="427"/>
    </location>
</feature>
<reference key="1">
    <citation type="journal article" date="1996" name="FEMS Microbiol. Lett.">
        <title>The arsenical resistance operon of IncN plasmid R46.</title>
        <authorList>
            <person name="Bruhn D.F."/>
            <person name="Li J."/>
            <person name="Silver S."/>
            <person name="Roberto F."/>
            <person name="Rosen B.P."/>
        </authorList>
    </citation>
    <scope>NUCLEOTIDE SEQUENCE [GENOMIC DNA]</scope>
</reference>
<geneLocation type="plasmid">
    <name>IncN R46</name>
</geneLocation>
<proteinExistence type="predicted"/>
<accession>P52146</accession>
<organism>
    <name type="scientific">Escherichia coli</name>
    <dbReference type="NCBI Taxonomy" id="562"/>
    <lineage>
        <taxon>Bacteria</taxon>
        <taxon>Pseudomonadati</taxon>
        <taxon>Pseudomonadota</taxon>
        <taxon>Gammaproteobacteria</taxon>
        <taxon>Enterobacterales</taxon>
        <taxon>Enterobacteriaceae</taxon>
        <taxon>Escherichia</taxon>
    </lineage>
</organism>
<gene>
    <name type="primary">arsB</name>
</gene>
<name>ARSB2_ECOLX</name>
<keyword id="KW-0059">Arsenical resistance</keyword>
<keyword id="KW-0997">Cell inner membrane</keyword>
<keyword id="KW-1003">Cell membrane</keyword>
<keyword id="KW-0472">Membrane</keyword>
<keyword id="KW-0614">Plasmid</keyword>
<keyword id="KW-0812">Transmembrane</keyword>
<keyword id="KW-1133">Transmembrane helix</keyword>
<sequence>MLLAGAIFVLTIVLVIWQPKGLGIGWSATLGAVLALISGVVHIGDIPVVWNIVWNATATFIAVIIISLLLDESGFFEWAALHVSRWGNGRGRLLFTYIVLLGAAVAALFANDGAALILTPIVIAMLLALGFSKGTTLAFVMAAGFIADTASLPLIVSNLVNIVSADFFGLGFTEYASVMVPVDIAAIIATLVMLHLFFRKDIPPTYDLALLKAPAKAIKDLATFRTGWIVLILLLVGFFVLEPLGIPVSAIAAVGAVILFAVANRGHAINTGKVLRGAPWQIVIFSLGMYLVVYGLRNAGLTEYLSGVLNVLADKGLWAATFGTGFLTAFLSSIMNNMPTVLVGALSIDGSTATGVIKEAMIFANVIGCDLGPKITPIGSLATLLWLHVLSQKNMTITWGYYFRTGIVMTLPVLFVTLAALALRLSFTL</sequence>
<dbReference type="EMBL" id="U38947">
    <property type="protein sequence ID" value="AAB09627.1"/>
    <property type="molecule type" value="Genomic_DNA"/>
</dbReference>
<dbReference type="SMR" id="P52146"/>
<dbReference type="IntAct" id="P52146">
    <property type="interactions" value="1"/>
</dbReference>
<dbReference type="STRING" id="585034.ECIAI1_3649"/>
<dbReference type="eggNOG" id="COG1055">
    <property type="taxonomic scope" value="Bacteria"/>
</dbReference>
<dbReference type="GO" id="GO:0005886">
    <property type="term" value="C:plasma membrane"/>
    <property type="evidence" value="ECO:0007669"/>
    <property type="project" value="UniProtKB-SubCell"/>
</dbReference>
<dbReference type="GO" id="GO:0042960">
    <property type="term" value="F:antimonite secondary active transmembrane transporter activity"/>
    <property type="evidence" value="ECO:0007669"/>
    <property type="project" value="TreeGrafter"/>
</dbReference>
<dbReference type="GO" id="GO:0008490">
    <property type="term" value="F:arsenite secondary active transmembrane transporter activity"/>
    <property type="evidence" value="ECO:0007669"/>
    <property type="project" value="TreeGrafter"/>
</dbReference>
<dbReference type="GO" id="GO:0046685">
    <property type="term" value="P:response to arsenic-containing substance"/>
    <property type="evidence" value="ECO:0007669"/>
    <property type="project" value="UniProtKB-KW"/>
</dbReference>
<dbReference type="CDD" id="cd01118">
    <property type="entry name" value="ArsB_permease"/>
    <property type="match status" value="1"/>
</dbReference>
<dbReference type="InterPro" id="IPR000802">
    <property type="entry name" value="Arsenical_pump_ArsB"/>
</dbReference>
<dbReference type="NCBIfam" id="TIGR00935">
    <property type="entry name" value="2a45"/>
    <property type="match status" value="1"/>
</dbReference>
<dbReference type="NCBIfam" id="NF011980">
    <property type="entry name" value="PRK15445.1"/>
    <property type="match status" value="1"/>
</dbReference>
<dbReference type="PANTHER" id="PTHR43302">
    <property type="entry name" value="TRANSPORTER ARSB-RELATED"/>
    <property type="match status" value="1"/>
</dbReference>
<dbReference type="PANTHER" id="PTHR43302:SF5">
    <property type="entry name" value="TRANSPORTER ARSB-RELATED"/>
    <property type="match status" value="1"/>
</dbReference>
<dbReference type="Pfam" id="PF02040">
    <property type="entry name" value="ArsB"/>
    <property type="match status" value="1"/>
</dbReference>
<dbReference type="PRINTS" id="PR00758">
    <property type="entry name" value="ARSENICPUMP"/>
</dbReference>
<protein>
    <recommendedName>
        <fullName>Arsenical pump membrane protein</fullName>
    </recommendedName>
</protein>
<evidence type="ECO:0000255" key="1"/>
<evidence type="ECO:0000305" key="2"/>